<keyword id="KW-0106">Calcium</keyword>
<keyword id="KW-0903">Direct protein sequencing</keyword>
<keyword id="KW-1015">Disulfide bond</keyword>
<keyword id="KW-1199">Hemostasis impairing toxin</keyword>
<keyword id="KW-0378">Hydrolase</keyword>
<keyword id="KW-0479">Metal-binding</keyword>
<keyword id="KW-0482">Metalloprotease</keyword>
<keyword id="KW-0645">Protease</keyword>
<keyword id="KW-0964">Secreted</keyword>
<keyword id="KW-0800">Toxin</keyword>
<keyword id="KW-0862">Zinc</keyword>
<sequence length="18" mass="2170">TPEHQRYVELFIVVDHGM</sequence>
<reference key="1">
    <citation type="journal article" date="2008" name="J. Proteomics">
        <title>Snake venomics of the Brazilian pitvipers Bothrops cotiara and Bothrops fonsecai. Identification of taxonomy markers.</title>
        <authorList>
            <person name="Tashima A.K."/>
            <person name="Sanz L."/>
            <person name="Camargo A.C."/>
            <person name="Serrano S.M."/>
            <person name="Calvete J.J."/>
        </authorList>
    </citation>
    <scope>PROTEIN SEQUENCE</scope>
    <scope>IDENTIFICATION BY MASS SPECTROMETRY</scope>
    <source>
        <tissue>Venom</tissue>
    </source>
</reference>
<accession>P0DMH3</accession>
<name>VM1_BOTFO</name>
<dbReference type="EC" id="3.4.24.-"/>
<dbReference type="GO" id="GO:0005576">
    <property type="term" value="C:extracellular region"/>
    <property type="evidence" value="ECO:0007669"/>
    <property type="project" value="UniProtKB-SubCell"/>
</dbReference>
<dbReference type="GO" id="GO:0046872">
    <property type="term" value="F:metal ion binding"/>
    <property type="evidence" value="ECO:0007669"/>
    <property type="project" value="UniProtKB-KW"/>
</dbReference>
<dbReference type="GO" id="GO:0008237">
    <property type="term" value="F:metallopeptidase activity"/>
    <property type="evidence" value="ECO:0007669"/>
    <property type="project" value="UniProtKB-KW"/>
</dbReference>
<dbReference type="GO" id="GO:0090729">
    <property type="term" value="F:toxin activity"/>
    <property type="evidence" value="ECO:0007669"/>
    <property type="project" value="UniProtKB-KW"/>
</dbReference>
<dbReference type="GO" id="GO:0006508">
    <property type="term" value="P:proteolysis"/>
    <property type="evidence" value="ECO:0007669"/>
    <property type="project" value="UniProtKB-KW"/>
</dbReference>
<evidence type="ECO:0000250" key="1"/>
<evidence type="ECO:0000305" key="2"/>
<comment type="function">
    <text evidence="1">Snake venom metalloproteinase that impairs hemostasis in the envenomed animal.</text>
</comment>
<comment type="cofactor">
    <cofactor evidence="1">
        <name>Zn(2+)</name>
        <dbReference type="ChEBI" id="CHEBI:29105"/>
    </cofactor>
    <text evidence="1">Binds 1 zinc ion per subunit.</text>
</comment>
<comment type="subunit">
    <text evidence="1">Monomer.</text>
</comment>
<comment type="subcellular location">
    <subcellularLocation>
        <location>Secreted</location>
    </subcellularLocation>
</comment>
<comment type="tissue specificity">
    <text>Expressed by the venom gland.</text>
</comment>
<comment type="PTM">
    <text evidence="1">Contains 3 disulfide bonds.</text>
</comment>
<comment type="similarity">
    <text evidence="2">Belongs to the venom metalloproteinase (M12B) family. P-I subfamily.</text>
</comment>
<organism>
    <name type="scientific">Bothrops fonsecai</name>
    <name type="common">Fonseca's lancehead</name>
    <name type="synonym">Rhinocerophis fonsecai</name>
    <dbReference type="NCBI Taxonomy" id="157549"/>
    <lineage>
        <taxon>Eukaryota</taxon>
        <taxon>Metazoa</taxon>
        <taxon>Chordata</taxon>
        <taxon>Craniata</taxon>
        <taxon>Vertebrata</taxon>
        <taxon>Euteleostomi</taxon>
        <taxon>Lepidosauria</taxon>
        <taxon>Squamata</taxon>
        <taxon>Bifurcata</taxon>
        <taxon>Unidentata</taxon>
        <taxon>Episquamata</taxon>
        <taxon>Toxicofera</taxon>
        <taxon>Serpentes</taxon>
        <taxon>Colubroidea</taxon>
        <taxon>Viperidae</taxon>
        <taxon>Crotalinae</taxon>
        <taxon>Bothrops</taxon>
    </lineage>
</organism>
<feature type="chain" id="PRO_0000428813" description="Snake venom metalloproteinase Bfon25">
    <location>
        <begin position="1"/>
        <end position="18" status="greater than"/>
    </location>
</feature>
<feature type="non-terminal residue">
    <location>
        <position position="18"/>
    </location>
</feature>
<proteinExistence type="evidence at protein level"/>
<protein>
    <recommendedName>
        <fullName>Snake venom metalloproteinase Bfon25</fullName>
        <shortName>SVMP</shortName>
        <ecNumber>3.4.24.-</ecNumber>
    </recommendedName>
</protein>